<feature type="chain" id="PRO_0000074302" description="Transcriptional regulator ATRX">
    <location>
        <begin position="1" status="less than"/>
        <end position="497" status="greater than"/>
    </location>
</feature>
<feature type="domain" description="ADD" evidence="3">
    <location>
        <begin position="21"/>
        <end position="158"/>
    </location>
</feature>
<feature type="zinc finger region" description="GATA-type; atypical" evidence="3">
    <location>
        <begin position="32"/>
        <end position="68"/>
    </location>
</feature>
<feature type="zinc finger region" description="PHD-type; atypical" evidence="3">
    <location>
        <begin position="79"/>
        <end position="134"/>
    </location>
</feature>
<feature type="region of interest" description="Disordered" evidence="4">
    <location>
        <begin position="346"/>
        <end position="368"/>
    </location>
</feature>
<feature type="compositionally biased region" description="Basic and acidic residues" evidence="4">
    <location>
        <begin position="351"/>
        <end position="365"/>
    </location>
</feature>
<feature type="modified residue" description="Phosphoserine" evidence="2">
    <location>
        <position position="178"/>
    </location>
</feature>
<feature type="cross-link" description="Glycyl lysine isopeptide (Lys-Gly) (interchain with G-Cter in SUMO2)" evidence="2">
    <location>
        <position position="1"/>
    </location>
</feature>
<feature type="cross-link" description="Glycyl lysine isopeptide (Lys-Gly) (interchain with G-Cter in SUMO2)" evidence="2">
    <location>
        <position position="5"/>
    </location>
</feature>
<feature type="cross-link" description="Glycyl lysine isopeptide (Lys-Gly) (interchain with G-Cter in SUMO2)" evidence="2">
    <location>
        <position position="161"/>
    </location>
</feature>
<feature type="cross-link" description="Glycyl lysine isopeptide (Lys-Gly) (interchain with G-Cter in SUMO2)" evidence="2">
    <location>
        <position position="300"/>
    </location>
</feature>
<feature type="non-terminal residue" evidence="6">
    <location>
        <position position="1"/>
    </location>
</feature>
<feature type="non-terminal residue" evidence="6">
    <location>
        <position position="497"/>
    </location>
</feature>
<organism>
    <name type="scientific">Notamacropus eugenii</name>
    <name type="common">Tammar wallaby</name>
    <name type="synonym">Macropus eugenii</name>
    <dbReference type="NCBI Taxonomy" id="9315"/>
    <lineage>
        <taxon>Eukaryota</taxon>
        <taxon>Metazoa</taxon>
        <taxon>Chordata</taxon>
        <taxon>Craniata</taxon>
        <taxon>Vertebrata</taxon>
        <taxon>Euteleostomi</taxon>
        <taxon>Mammalia</taxon>
        <taxon>Metatheria</taxon>
        <taxon>Diprotodontia</taxon>
        <taxon>Macropodidae</taxon>
        <taxon>Notamacropus</taxon>
    </lineage>
</organism>
<evidence type="ECO:0000250" key="1"/>
<evidence type="ECO:0000250" key="2">
    <source>
        <dbReference type="UniProtKB" id="P46100"/>
    </source>
</evidence>
<evidence type="ECO:0000255" key="3">
    <source>
        <dbReference type="PROSITE-ProRule" id="PRU00865"/>
    </source>
</evidence>
<evidence type="ECO:0000256" key="4">
    <source>
        <dbReference type="SAM" id="MobiDB-lite"/>
    </source>
</evidence>
<evidence type="ECO:0000269" key="5">
    <source>
    </source>
</evidence>
<evidence type="ECO:0000303" key="6">
    <source>
    </source>
</evidence>
<evidence type="ECO:0000305" key="7"/>
<dbReference type="EC" id="3.6.4.12"/>
<dbReference type="SMR" id="P82798"/>
<dbReference type="GO" id="GO:0000781">
    <property type="term" value="C:chromosome, telomeric region"/>
    <property type="evidence" value="ECO:0000250"/>
    <property type="project" value="UniProtKB"/>
</dbReference>
<dbReference type="GO" id="GO:0005721">
    <property type="term" value="C:pericentric heterochromatin"/>
    <property type="evidence" value="ECO:0007669"/>
    <property type="project" value="TreeGrafter"/>
</dbReference>
<dbReference type="GO" id="GO:0016605">
    <property type="term" value="C:PML body"/>
    <property type="evidence" value="ECO:0007669"/>
    <property type="project" value="UniProtKB-SubCell"/>
</dbReference>
<dbReference type="GO" id="GO:0005524">
    <property type="term" value="F:ATP binding"/>
    <property type="evidence" value="ECO:0007669"/>
    <property type="project" value="UniProtKB-KW"/>
</dbReference>
<dbReference type="GO" id="GO:0016887">
    <property type="term" value="F:ATP hydrolysis activity"/>
    <property type="evidence" value="ECO:0007669"/>
    <property type="project" value="RHEA"/>
</dbReference>
<dbReference type="GO" id="GO:0003682">
    <property type="term" value="F:chromatin binding"/>
    <property type="evidence" value="ECO:0000250"/>
    <property type="project" value="UniProtKB"/>
</dbReference>
<dbReference type="GO" id="GO:0031490">
    <property type="term" value="F:chromatin DNA binding"/>
    <property type="evidence" value="ECO:0007669"/>
    <property type="project" value="TreeGrafter"/>
</dbReference>
<dbReference type="GO" id="GO:0004386">
    <property type="term" value="F:helicase activity"/>
    <property type="evidence" value="ECO:0007669"/>
    <property type="project" value="UniProtKB-KW"/>
</dbReference>
<dbReference type="GO" id="GO:0042393">
    <property type="term" value="F:histone binding"/>
    <property type="evidence" value="ECO:0000250"/>
    <property type="project" value="UniProtKB"/>
</dbReference>
<dbReference type="GO" id="GO:0035064">
    <property type="term" value="F:methylated histone binding"/>
    <property type="evidence" value="ECO:0007669"/>
    <property type="project" value="TreeGrafter"/>
</dbReference>
<dbReference type="GO" id="GO:0008270">
    <property type="term" value="F:zinc ion binding"/>
    <property type="evidence" value="ECO:0007669"/>
    <property type="project" value="UniProtKB-KW"/>
</dbReference>
<dbReference type="GO" id="GO:0072711">
    <property type="term" value="P:cellular response to hydroxyurea"/>
    <property type="evidence" value="ECO:0000250"/>
    <property type="project" value="UniProtKB"/>
</dbReference>
<dbReference type="GO" id="GO:0006325">
    <property type="term" value="P:chromatin organization"/>
    <property type="evidence" value="ECO:0000250"/>
    <property type="project" value="UniProtKB"/>
</dbReference>
<dbReference type="GO" id="GO:0006338">
    <property type="term" value="P:chromatin remodeling"/>
    <property type="evidence" value="ECO:0000250"/>
    <property type="project" value="UniProtKB"/>
</dbReference>
<dbReference type="GO" id="GO:0030330">
    <property type="term" value="P:DNA damage response, signal transduction by p53 class mediator"/>
    <property type="evidence" value="ECO:0000250"/>
    <property type="project" value="UniProtKB"/>
</dbReference>
<dbReference type="GO" id="GO:0006281">
    <property type="term" value="P:DNA repair"/>
    <property type="evidence" value="ECO:0007669"/>
    <property type="project" value="UniProtKB-KW"/>
</dbReference>
<dbReference type="GO" id="GO:0006334">
    <property type="term" value="P:nucleosome assembly"/>
    <property type="evidence" value="ECO:0000250"/>
    <property type="project" value="UniProtKB"/>
</dbReference>
<dbReference type="GO" id="GO:0010571">
    <property type="term" value="P:positive regulation of nuclear cell cycle DNA replication"/>
    <property type="evidence" value="ECO:0000250"/>
    <property type="project" value="UniProtKB"/>
</dbReference>
<dbReference type="GO" id="GO:0032206">
    <property type="term" value="P:positive regulation of telomere maintenance"/>
    <property type="evidence" value="ECO:0000250"/>
    <property type="project" value="UniProtKB"/>
</dbReference>
<dbReference type="GO" id="GO:0045944">
    <property type="term" value="P:positive regulation of transcription by RNA polymerase II"/>
    <property type="evidence" value="ECO:0000250"/>
    <property type="project" value="UniProtKB"/>
</dbReference>
<dbReference type="GO" id="GO:0031297">
    <property type="term" value="P:replication fork processing"/>
    <property type="evidence" value="ECO:0000250"/>
    <property type="project" value="UniProtKB"/>
</dbReference>
<dbReference type="GO" id="GO:0031509">
    <property type="term" value="P:subtelomeric heterochromatin formation"/>
    <property type="evidence" value="ECO:0000250"/>
    <property type="project" value="UniProtKB"/>
</dbReference>
<dbReference type="CDD" id="cd11726">
    <property type="entry name" value="ADDz_ATRX"/>
    <property type="match status" value="1"/>
</dbReference>
<dbReference type="Gene3D" id="3.30.40.10">
    <property type="entry name" value="Zinc/RING finger domain, C3HC4 (zinc finger)"/>
    <property type="match status" value="1"/>
</dbReference>
<dbReference type="InterPro" id="IPR025766">
    <property type="entry name" value="ADD"/>
</dbReference>
<dbReference type="InterPro" id="IPR041430">
    <property type="entry name" value="ADD_ATRX"/>
</dbReference>
<dbReference type="InterPro" id="IPR052131">
    <property type="entry name" value="ATRX_domain-containing"/>
</dbReference>
<dbReference type="InterPro" id="IPR011011">
    <property type="entry name" value="Znf_FYVE_PHD"/>
</dbReference>
<dbReference type="InterPro" id="IPR013083">
    <property type="entry name" value="Znf_RING/FYVE/PHD"/>
</dbReference>
<dbReference type="PANTHER" id="PTHR46357">
    <property type="entry name" value="TRANSCRIPTIONAL REGULATOR ATRX"/>
    <property type="match status" value="1"/>
</dbReference>
<dbReference type="PANTHER" id="PTHR46357:SF1">
    <property type="entry name" value="TRANSCRIPTIONAL REGULATOR ATRX"/>
    <property type="match status" value="1"/>
</dbReference>
<dbReference type="Pfam" id="PF17981">
    <property type="entry name" value="ADD_ATRX"/>
    <property type="match status" value="1"/>
</dbReference>
<dbReference type="SUPFAM" id="SSF57903">
    <property type="entry name" value="FYVE/PHD zinc finger"/>
    <property type="match status" value="1"/>
</dbReference>
<dbReference type="PROSITE" id="PS51533">
    <property type="entry name" value="ADD"/>
    <property type="match status" value="1"/>
</dbReference>
<comment type="function">
    <text evidence="2">Involved in transcriptional regulation and chromatin remodeling. Facilitates DNA replication in multiple cellular environments and is required for efficient replication of a subset of genomic loci. Binds to DNA tandem repeat sequences in both telomeres and euchromatin and in vitro binds DNA quadruplex structures. May help stabilizing G-rich regions into regular chromatin structures by remodeling G4 DNA and incorporating H3.3-containing nucleosomes. Catalytic component of the chromatin remodeling complex ATRX:DAXX which has ATP-dependent DNA translocase activity and catalyzes the replication-independent deposition of histone H3.3 in pericentric DNA repeats outside S-phase and telomeres, and the in vitro remodeling of H3.3-containing nucleosomes. Its heterochromatin targeting is proposed to involve a combinatorial readout of histone H3 modifications (specifically methylation states of H3K9 and H3K4) and association with CBX5. May be involved in transcriptional regulation of telomeric repeat-containing RNA (TERRA). Acts as a negative regulator of chromatin incorporation of transcriptionally repressive histone MACROH2A1, particularily at telomeres. Binds to zinc-finger coding genes with atypical chromatin signatures and regulates its H3K9me3 levels. Forms a complex with ZNF274, TRIM28 and SETDB1 to facilitate the deposition and maintenance of H3K9me3 at the 3' exons of zinc-finger genes (By similarity).</text>
</comment>
<comment type="catalytic activity">
    <reaction>
        <text>ATP + H2O = ADP + phosphate + H(+)</text>
        <dbReference type="Rhea" id="RHEA:13065"/>
        <dbReference type="ChEBI" id="CHEBI:15377"/>
        <dbReference type="ChEBI" id="CHEBI:15378"/>
        <dbReference type="ChEBI" id="CHEBI:30616"/>
        <dbReference type="ChEBI" id="CHEBI:43474"/>
        <dbReference type="ChEBI" id="CHEBI:456216"/>
        <dbReference type="EC" id="3.6.4.12"/>
    </reaction>
</comment>
<comment type="subunit">
    <text evidence="2">Interacts with DAXX to form the chromatin remodeling complex ATRX:DAXX. Probably binds EZH2. Binds annexin V in a calcium and phosphatidylcholine/phosphatidylserine-dependent manner. Interacts directly with CBX5 via the PxVxL motif. Interacts with RAD50, MRE11 and NBN; indicative for an association with the MRN complex. Interacts with histone MACROH2A1. Interacts with histone H3 peptides methylated at 'Lys-10' with preferences H3K9me3 &gt; H3K9me2 &gt; H3K9me1. Interacts with histone H3 peptides unmethylated at 'Lys-5' (H3K4me0). Interacts with MECP2, SMC1 and SMC3. Interacts with SETDB1, TRIM28 and ZNF274 (By similarity).</text>
</comment>
<comment type="subcellular location">
    <subcellularLocation>
        <location evidence="1">Nucleus</location>
    </subcellularLocation>
    <subcellularLocation>
        <location evidence="1">Chromosome</location>
        <location evidence="1">Telomere</location>
    </subcellularLocation>
    <subcellularLocation>
        <location evidence="1">Nucleus</location>
        <location evidence="1">PML body</location>
    </subcellularLocation>
    <text evidence="1">Associated with pericentromeric heterochromatin during interphase and mitosis, probably by interacting with CBX5/HP1 alpha. Colocalizes with histone H3.3, DAXX, HIRA and ASF1A at PML-nuclear bodies (By similarity).</text>
</comment>
<comment type="tissue specificity">
    <text evidence="5">Expressed in all tissues except developing testis.</text>
</comment>
<comment type="domain">
    <text evidence="1">The ADD domain predominantly interacts with histone H3 trimethylated at 'Lys-10'(H3K9me3) (and to a lesser extent H3 mono- or dimethylated at 'Lys-10') and simultaneously to histone H3 unmethylated at 'Lys-5' (H3K4me0). The interaction with H3K9me3 is disrupted by the presence of H3K4me3 suggesting a readout of the combined histone H3 methylation state (By similarity).</text>
</comment>
<comment type="similarity">
    <text evidence="7">Belongs to the SNF2/RAD54 helicase family.</text>
</comment>
<protein>
    <recommendedName>
        <fullName>Transcriptional regulator ATRX</fullName>
        <ecNumber>3.6.4.12</ecNumber>
    </recommendedName>
    <alternativeName>
        <fullName>ATP-dependent helicase ATRX</fullName>
    </alternativeName>
    <alternativeName>
        <fullName>X-linked nuclear protein</fullName>
    </alternativeName>
</protein>
<proteinExistence type="evidence at transcript level"/>
<gene>
    <name type="primary">ATRX</name>
</gene>
<keyword id="KW-0067">ATP-binding</keyword>
<keyword id="KW-0156">Chromatin regulator</keyword>
<keyword id="KW-0158">Chromosome</keyword>
<keyword id="KW-0227">DNA damage</keyword>
<keyword id="KW-0234">DNA repair</keyword>
<keyword id="KW-0238">DNA-binding</keyword>
<keyword id="KW-0347">Helicase</keyword>
<keyword id="KW-0378">Hydrolase</keyword>
<keyword id="KW-1017">Isopeptide bond</keyword>
<keyword id="KW-0479">Metal-binding</keyword>
<keyword id="KW-0547">Nucleotide-binding</keyword>
<keyword id="KW-0539">Nucleus</keyword>
<keyword id="KW-0597">Phosphoprotein</keyword>
<keyword id="KW-0779">Telomere</keyword>
<keyword id="KW-0804">Transcription</keyword>
<keyword id="KW-0805">Transcription regulation</keyword>
<keyword id="KW-0832">Ubl conjugation</keyword>
<keyword id="KW-0862">Zinc</keyword>
<keyword id="KW-0863">Zinc-finger</keyword>
<name>ATRX_NOTEU</name>
<sequence>KDDFKGPEFRSRSKMKTENLKKRGEGLHGIVSCTACGQQVNHFQKDSIYRHPTLKVLICKNCYKYYMSDDISRDADGMDEQCRWCAEGGNLICCDFCHNAFCKKCILRNLGRKELSAIMDENSQWYCYICRPEPLLDLVTACHSVFKNLEQLLQQNKKKIKVESEKSNKLFEHTHRFSPKKNVSSCNGEEKKSDDAYSGSVTYSFTALMVPKDIVKKTKKLVETTASMNTSFVRFLKQASENPEVSPVTKLRQLKAFKSVLNDVKKVHLALEGSLNVEIRTLEALNKETVTKEHKAEGVKPDTEVTKVEVYCAPKKKDFSKCATKLSVKQVDSEINGQSLPVVGQPVHKTTSAEDKKSSRKDPHFEPANTSEALDMDFSLLIFPLIFIFFELSSCYFLLSSSFLFQSCFSLTSIFLLQIVDLLFFKFYFFFKISLISIFLLQIVHLLFSLNLFSSKLFFLFLNFFSFFKLSTFQIPNFSSKMLFPDFYLPLPILLFL</sequence>
<reference evidence="7" key="1">
    <citation type="journal article" date="2000" name="Proc. Natl. Acad. Sci. U.S.A.">
        <title>The human sex-reversing ATRX gene has a homologue on the marsupial Y chromosome, ATRY: implications for the evolution of mammalian sex determination.</title>
        <authorList>
            <person name="Pask A."/>
            <person name="Renfree M.B."/>
            <person name="Marshall Graves J.A."/>
        </authorList>
    </citation>
    <scope>NUCLEOTIDE SEQUENCE</scope>
    <scope>TISSUE SPECIFICITY</scope>
</reference>
<accession>P82798</accession>